<name>CBIA_STRSV</name>
<accession>A3CL56</accession>
<gene>
    <name evidence="1" type="primary">cbiA</name>
    <name type="ordered locus">SSA_0463</name>
</gene>
<dbReference type="EC" id="6.3.5.11" evidence="1"/>
<dbReference type="EMBL" id="CP000387">
    <property type="protein sequence ID" value="ABN43911.1"/>
    <property type="molecule type" value="Genomic_DNA"/>
</dbReference>
<dbReference type="RefSeq" id="WP_002917659.1">
    <property type="nucleotide sequence ID" value="NC_009009.1"/>
</dbReference>
<dbReference type="RefSeq" id="YP_001034461.1">
    <property type="nucleotide sequence ID" value="NC_009009.1"/>
</dbReference>
<dbReference type="SMR" id="A3CL56"/>
<dbReference type="STRING" id="388919.SSA_0463"/>
<dbReference type="KEGG" id="ssa:SSA_0463"/>
<dbReference type="PATRIC" id="fig|388919.9.peg.447"/>
<dbReference type="eggNOG" id="COG1797">
    <property type="taxonomic scope" value="Bacteria"/>
</dbReference>
<dbReference type="HOGENOM" id="CLU_022752_2_0_9"/>
<dbReference type="OrthoDB" id="9764035at2"/>
<dbReference type="UniPathway" id="UPA00148">
    <property type="reaction ID" value="UER00231"/>
</dbReference>
<dbReference type="Proteomes" id="UP000002148">
    <property type="component" value="Chromosome"/>
</dbReference>
<dbReference type="GO" id="GO:0005524">
    <property type="term" value="F:ATP binding"/>
    <property type="evidence" value="ECO:0007669"/>
    <property type="project" value="UniProtKB-UniRule"/>
</dbReference>
<dbReference type="GO" id="GO:0042242">
    <property type="term" value="F:cobyrinic acid a,c-diamide synthase activity"/>
    <property type="evidence" value="ECO:0007669"/>
    <property type="project" value="UniProtKB-UniRule"/>
</dbReference>
<dbReference type="GO" id="GO:0009236">
    <property type="term" value="P:cobalamin biosynthetic process"/>
    <property type="evidence" value="ECO:0007669"/>
    <property type="project" value="UniProtKB-UniRule"/>
</dbReference>
<dbReference type="CDD" id="cd05388">
    <property type="entry name" value="CobB_N"/>
    <property type="match status" value="1"/>
</dbReference>
<dbReference type="CDD" id="cd03130">
    <property type="entry name" value="GATase1_CobB"/>
    <property type="match status" value="1"/>
</dbReference>
<dbReference type="Gene3D" id="3.40.50.880">
    <property type="match status" value="1"/>
</dbReference>
<dbReference type="Gene3D" id="3.40.50.300">
    <property type="entry name" value="P-loop containing nucleotide triphosphate hydrolases"/>
    <property type="match status" value="2"/>
</dbReference>
<dbReference type="HAMAP" id="MF_00027">
    <property type="entry name" value="CobB_CbiA"/>
    <property type="match status" value="1"/>
</dbReference>
<dbReference type="InterPro" id="IPR004484">
    <property type="entry name" value="CbiA/CobB_synth"/>
</dbReference>
<dbReference type="InterPro" id="IPR029062">
    <property type="entry name" value="Class_I_gatase-like"/>
</dbReference>
<dbReference type="InterPro" id="IPR002586">
    <property type="entry name" value="CobQ/CobB/MinD/ParA_Nub-bd_dom"/>
</dbReference>
<dbReference type="InterPro" id="IPR011698">
    <property type="entry name" value="GATase_3"/>
</dbReference>
<dbReference type="InterPro" id="IPR027417">
    <property type="entry name" value="P-loop_NTPase"/>
</dbReference>
<dbReference type="NCBIfam" id="TIGR00379">
    <property type="entry name" value="cobB"/>
    <property type="match status" value="1"/>
</dbReference>
<dbReference type="NCBIfam" id="NF002204">
    <property type="entry name" value="PRK01077.1"/>
    <property type="match status" value="1"/>
</dbReference>
<dbReference type="PANTHER" id="PTHR43873">
    <property type="entry name" value="COBYRINATE A,C-DIAMIDE SYNTHASE"/>
    <property type="match status" value="1"/>
</dbReference>
<dbReference type="PANTHER" id="PTHR43873:SF1">
    <property type="entry name" value="COBYRINATE A,C-DIAMIDE SYNTHASE"/>
    <property type="match status" value="1"/>
</dbReference>
<dbReference type="Pfam" id="PF01656">
    <property type="entry name" value="CbiA"/>
    <property type="match status" value="1"/>
</dbReference>
<dbReference type="Pfam" id="PF07685">
    <property type="entry name" value="GATase_3"/>
    <property type="match status" value="1"/>
</dbReference>
<dbReference type="SUPFAM" id="SSF52317">
    <property type="entry name" value="Class I glutamine amidotransferase-like"/>
    <property type="match status" value="1"/>
</dbReference>
<dbReference type="SUPFAM" id="SSF52540">
    <property type="entry name" value="P-loop containing nucleoside triphosphate hydrolases"/>
    <property type="match status" value="1"/>
</dbReference>
<dbReference type="PROSITE" id="PS51274">
    <property type="entry name" value="GATASE_COBBQ"/>
    <property type="match status" value="1"/>
</dbReference>
<feature type="chain" id="PRO_1000002296" description="Cobyrinate a,c-diamide synthase">
    <location>
        <begin position="1"/>
        <end position="452"/>
    </location>
</feature>
<feature type="domain" description="GATase cobBQ-type" evidence="1">
    <location>
        <begin position="246"/>
        <end position="439"/>
    </location>
</feature>
<feature type="active site" description="Nucleophile" evidence="1">
    <location>
        <position position="328"/>
    </location>
</feature>
<feature type="site" description="Increases nucleophilicity of active site Cys" evidence="1">
    <location>
        <position position="431"/>
    </location>
</feature>
<protein>
    <recommendedName>
        <fullName evidence="1">Cobyrinate a,c-diamide synthase</fullName>
        <ecNumber evidence="1">6.3.5.11</ecNumber>
    </recommendedName>
    <alternativeName>
        <fullName evidence="1">Cobyrinic acid a,c-diamide synthetase</fullName>
    </alternativeName>
</protein>
<comment type="function">
    <text evidence="1">Catalyzes the ATP-dependent amidation of the two carboxylate groups at positions a and c of cobyrinate, using either L-glutamine or ammonia as the nitrogen source.</text>
</comment>
<comment type="catalytic activity">
    <reaction evidence="1">
        <text>cob(II)yrinate + 2 L-glutamine + 2 ATP + 2 H2O = cob(II)yrinate a,c diamide + 2 L-glutamate + 2 ADP + 2 phosphate + 2 H(+)</text>
        <dbReference type="Rhea" id="RHEA:26289"/>
        <dbReference type="ChEBI" id="CHEBI:15377"/>
        <dbReference type="ChEBI" id="CHEBI:15378"/>
        <dbReference type="ChEBI" id="CHEBI:29985"/>
        <dbReference type="ChEBI" id="CHEBI:30616"/>
        <dbReference type="ChEBI" id="CHEBI:43474"/>
        <dbReference type="ChEBI" id="CHEBI:58359"/>
        <dbReference type="ChEBI" id="CHEBI:58537"/>
        <dbReference type="ChEBI" id="CHEBI:58894"/>
        <dbReference type="ChEBI" id="CHEBI:456216"/>
        <dbReference type="EC" id="6.3.5.11"/>
    </reaction>
</comment>
<comment type="cofactor">
    <cofactor evidence="1">
        <name>Mg(2+)</name>
        <dbReference type="ChEBI" id="CHEBI:18420"/>
    </cofactor>
</comment>
<comment type="pathway">
    <text evidence="1">Cofactor biosynthesis; adenosylcobalamin biosynthesis; cob(II)yrinate a,c-diamide from sirohydrochlorin (anaerobic route): step 10/10.</text>
</comment>
<comment type="domain">
    <text evidence="1">Comprises of two domains. The C-terminal domain contains the binding site for glutamine and catalyzes the hydrolysis of this substrate to glutamate and ammonia. The N-terminal domain is anticipated to bind ATP and cobyrinate and catalyzes the ultimate synthesis of the diamide product. The ammonia produced via the glutaminase domain is probably translocated to the adjacent domain via a molecular tunnel, where it reacts with an activated intermediate.</text>
</comment>
<comment type="miscellaneous">
    <text evidence="1">The a and c carboxylates of cobyrinate are activated for nucleophilic attack via formation of a phosphorylated intermediate by ATP. CbiA catalyzes first the amidation of the c-carboxylate, and then that of the a-carboxylate.</text>
</comment>
<comment type="similarity">
    <text evidence="1">Belongs to the CobB/CbiA family.</text>
</comment>
<sequence>MKQFMLAGVSSGVGKTTVTLGILKALADRGYQVQPYKIGPDYIDTAYHSRITKRPSRNVDSFMIPDDQSLAWSYYKWHGDADVAVVEGVMGLFDGLGTDKDCASSASVAKKLGIPVVLIIDGKATSTSAAAMVHGFATFDPDLDIAGVIINRVASQTHFELIKGAIERYTDVEVLGYLPKNATAELPSRHLGLIPDVEMDDLDRRFEDLGAATAKHINLDRLLEKAELPDKRMTNPFRISNDQPLTLAYALDDAFHFYYEDNLDFLRELNVQLVPFSPLKDKELPAADAYYFGGGFPEVYAQELMANADFRASVKKAHEQGRPIYAECGGLMYLGELLEVEGQVYEMVGIFKGKSLMTPGLKSFGYCQAETQVDSLFGPKGTAVRGHEFHHSVFETEEDTVLKLEKVRDGQVVAAWTGGYQKGRTFASYLHVHFYQDEQLLANWLDYIKEAN</sequence>
<keyword id="KW-0067">ATP-binding</keyword>
<keyword id="KW-0169">Cobalamin biosynthesis</keyword>
<keyword id="KW-0315">Glutamine amidotransferase</keyword>
<keyword id="KW-0436">Ligase</keyword>
<keyword id="KW-0460">Magnesium</keyword>
<keyword id="KW-0547">Nucleotide-binding</keyword>
<keyword id="KW-1185">Reference proteome</keyword>
<organism>
    <name type="scientific">Streptococcus sanguinis (strain SK36)</name>
    <dbReference type="NCBI Taxonomy" id="388919"/>
    <lineage>
        <taxon>Bacteria</taxon>
        <taxon>Bacillati</taxon>
        <taxon>Bacillota</taxon>
        <taxon>Bacilli</taxon>
        <taxon>Lactobacillales</taxon>
        <taxon>Streptococcaceae</taxon>
        <taxon>Streptococcus</taxon>
    </lineage>
</organism>
<proteinExistence type="inferred from homology"/>
<evidence type="ECO:0000255" key="1">
    <source>
        <dbReference type="HAMAP-Rule" id="MF_00027"/>
    </source>
</evidence>
<reference key="1">
    <citation type="journal article" date="2007" name="J. Bacteriol.">
        <title>Genome of the opportunistic pathogen Streptococcus sanguinis.</title>
        <authorList>
            <person name="Xu P."/>
            <person name="Alves J.M."/>
            <person name="Kitten T."/>
            <person name="Brown A."/>
            <person name="Chen Z."/>
            <person name="Ozaki L.S."/>
            <person name="Manque P."/>
            <person name="Ge X."/>
            <person name="Serrano M.G."/>
            <person name="Puiu D."/>
            <person name="Hendricks S."/>
            <person name="Wang Y."/>
            <person name="Chaplin M.D."/>
            <person name="Akan D."/>
            <person name="Paik S."/>
            <person name="Peterson D.L."/>
            <person name="Macrina F.L."/>
            <person name="Buck G.A."/>
        </authorList>
    </citation>
    <scope>NUCLEOTIDE SEQUENCE [LARGE SCALE GENOMIC DNA]</scope>
    <source>
        <strain>SK36</strain>
    </source>
</reference>